<protein>
    <recommendedName>
        <fullName>3-hydroxybutyryl-CoA dehydrogenase</fullName>
        <ecNumber evidence="4">1.1.1.157</ecNumber>
    </recommendedName>
    <alternativeName>
        <fullName>Beta-hydroxybutyryl-CoA dehydrogenase</fullName>
        <shortName>BHBD</shortName>
    </alternativeName>
</protein>
<dbReference type="EC" id="1.1.1.157" evidence="4"/>
<dbReference type="EMBL" id="AL123456">
    <property type="protein sequence ID" value="CCP43201.1"/>
    <property type="molecule type" value="Genomic_DNA"/>
</dbReference>
<dbReference type="PIR" id="H70828">
    <property type="entry name" value="H70828"/>
</dbReference>
<dbReference type="RefSeq" id="NP_214982.1">
    <property type="nucleotide sequence ID" value="NC_000962.3"/>
</dbReference>
<dbReference type="RefSeq" id="WP_003402318.1">
    <property type="nucleotide sequence ID" value="NZ_NVQJ01000002.1"/>
</dbReference>
<dbReference type="PDB" id="6HRD">
    <property type="method" value="X-ray"/>
    <property type="resolution" value="2.11 A"/>
    <property type="chains" value="A/B/C/D/E/F=1-286"/>
</dbReference>
<dbReference type="PDBsum" id="6HRD"/>
<dbReference type="SMR" id="P9WNP7"/>
<dbReference type="BioGRID" id="4355762">
    <property type="interactions" value="1"/>
</dbReference>
<dbReference type="FunCoup" id="P9WNP7">
    <property type="interactions" value="393"/>
</dbReference>
<dbReference type="STRING" id="83332.Rv0468"/>
<dbReference type="SwissLipids" id="SLP:000001179"/>
<dbReference type="PaxDb" id="83332-Rv0468"/>
<dbReference type="DNASU" id="886288"/>
<dbReference type="GeneID" id="45424430"/>
<dbReference type="GeneID" id="886288"/>
<dbReference type="KEGG" id="mtu:Rv0468"/>
<dbReference type="KEGG" id="mtv:RVBD_0468"/>
<dbReference type="TubercuList" id="Rv0468"/>
<dbReference type="eggNOG" id="COG1250">
    <property type="taxonomic scope" value="Bacteria"/>
</dbReference>
<dbReference type="InParanoid" id="P9WNP7"/>
<dbReference type="OrthoDB" id="9771883at2"/>
<dbReference type="PhylomeDB" id="P9WNP7"/>
<dbReference type="BRENDA" id="1.1.1.35">
    <property type="organism ID" value="3445"/>
</dbReference>
<dbReference type="UniPathway" id="UPA00863"/>
<dbReference type="Proteomes" id="UP000001584">
    <property type="component" value="Chromosome"/>
</dbReference>
<dbReference type="GO" id="GO:0005829">
    <property type="term" value="C:cytosol"/>
    <property type="evidence" value="ECO:0007005"/>
    <property type="project" value="MTBBASE"/>
</dbReference>
<dbReference type="GO" id="GO:0009274">
    <property type="term" value="C:peptidoglycan-based cell wall"/>
    <property type="evidence" value="ECO:0007005"/>
    <property type="project" value="MTBBASE"/>
</dbReference>
<dbReference type="GO" id="GO:0005886">
    <property type="term" value="C:plasma membrane"/>
    <property type="evidence" value="ECO:0007005"/>
    <property type="project" value="MTBBASE"/>
</dbReference>
<dbReference type="GO" id="GO:0008691">
    <property type="term" value="F:3-hydroxybutyryl-CoA dehydrogenase activity"/>
    <property type="evidence" value="ECO:0000314"/>
    <property type="project" value="MTBBASE"/>
</dbReference>
<dbReference type="GO" id="GO:0070403">
    <property type="term" value="F:NAD+ binding"/>
    <property type="evidence" value="ECO:0007669"/>
    <property type="project" value="InterPro"/>
</dbReference>
<dbReference type="GO" id="GO:0019605">
    <property type="term" value="P:butyrate metabolic process"/>
    <property type="evidence" value="ECO:0007669"/>
    <property type="project" value="UniProtKB-UniPathway"/>
</dbReference>
<dbReference type="GO" id="GO:0006635">
    <property type="term" value="P:fatty acid beta-oxidation"/>
    <property type="evidence" value="ECO:0000314"/>
    <property type="project" value="MTBBASE"/>
</dbReference>
<dbReference type="GO" id="GO:0030497">
    <property type="term" value="P:fatty acid elongation"/>
    <property type="evidence" value="ECO:0000314"/>
    <property type="project" value="MTBBASE"/>
</dbReference>
<dbReference type="FunFam" id="1.10.1040.10:FF:000019">
    <property type="entry name" value="3-hydroxybutyryl-CoA dehydrogenase FadB2"/>
    <property type="match status" value="1"/>
</dbReference>
<dbReference type="FunFam" id="3.40.50.720:FF:000009">
    <property type="entry name" value="Fatty oxidation complex, alpha subunit"/>
    <property type="match status" value="1"/>
</dbReference>
<dbReference type="Gene3D" id="1.10.1040.10">
    <property type="entry name" value="N-(1-d-carboxylethyl)-l-norvaline Dehydrogenase, domain 2"/>
    <property type="match status" value="1"/>
</dbReference>
<dbReference type="Gene3D" id="3.40.50.720">
    <property type="entry name" value="NAD(P)-binding Rossmann-like Domain"/>
    <property type="match status" value="1"/>
</dbReference>
<dbReference type="InterPro" id="IPR022694">
    <property type="entry name" value="3-OHacyl-CoA_DH"/>
</dbReference>
<dbReference type="InterPro" id="IPR006176">
    <property type="entry name" value="3-OHacyl-CoA_DH_NAD-bd"/>
</dbReference>
<dbReference type="InterPro" id="IPR006108">
    <property type="entry name" value="3HC_DH_C"/>
</dbReference>
<dbReference type="InterPro" id="IPR008927">
    <property type="entry name" value="6-PGluconate_DH-like_C_sf"/>
</dbReference>
<dbReference type="InterPro" id="IPR013328">
    <property type="entry name" value="6PGD_dom2"/>
</dbReference>
<dbReference type="InterPro" id="IPR036291">
    <property type="entry name" value="NAD(P)-bd_dom_sf"/>
</dbReference>
<dbReference type="NCBIfam" id="NF005875">
    <property type="entry name" value="PRK07819.1"/>
    <property type="match status" value="1"/>
</dbReference>
<dbReference type="PANTHER" id="PTHR48075">
    <property type="entry name" value="3-HYDROXYACYL-COA DEHYDROGENASE FAMILY PROTEIN"/>
    <property type="match status" value="1"/>
</dbReference>
<dbReference type="PANTHER" id="PTHR48075:SF9">
    <property type="entry name" value="3-HYDROXYBUTYRYL-COA DEHYDROGENASE"/>
    <property type="match status" value="1"/>
</dbReference>
<dbReference type="Pfam" id="PF00725">
    <property type="entry name" value="3HCDH"/>
    <property type="match status" value="1"/>
</dbReference>
<dbReference type="Pfam" id="PF02737">
    <property type="entry name" value="3HCDH_N"/>
    <property type="match status" value="1"/>
</dbReference>
<dbReference type="PIRSF" id="PIRSF000105">
    <property type="entry name" value="HCDH"/>
    <property type="match status" value="1"/>
</dbReference>
<dbReference type="SUPFAM" id="SSF48179">
    <property type="entry name" value="6-phosphogluconate dehydrogenase C-terminal domain-like"/>
    <property type="match status" value="1"/>
</dbReference>
<dbReference type="SUPFAM" id="SSF51735">
    <property type="entry name" value="NAD(P)-binding Rossmann-fold domains"/>
    <property type="match status" value="1"/>
</dbReference>
<gene>
    <name type="primary">fadB2</name>
    <name type="ordered locus">Rv0468</name>
</gene>
<evidence type="ECO:0000250" key="1"/>
<evidence type="ECO:0000269" key="2">
    <source>
    </source>
</evidence>
<evidence type="ECO:0000269" key="3">
    <source>
    </source>
</evidence>
<evidence type="ECO:0000269" key="4">
    <source>
    </source>
</evidence>
<evidence type="ECO:0000305" key="5"/>
<evidence type="ECO:0007829" key="6">
    <source>
        <dbReference type="PDB" id="6HRD"/>
    </source>
</evidence>
<keyword id="KW-0002">3D-structure</keyword>
<keyword id="KW-0276">Fatty acid metabolism</keyword>
<keyword id="KW-0443">Lipid metabolism</keyword>
<keyword id="KW-0521">NADP</keyword>
<keyword id="KW-0560">Oxidoreductase</keyword>
<keyword id="KW-1185">Reference proteome</keyword>
<comment type="function">
    <text evidence="4">Catalyzes the NAD-dependent oxidation of beta-hydroxybutyryl-CoA to acetoacetyl-CoA in vitro at pH 10. Also catalyzes the reverse reaction albeit in a lower pH range of 5.5-6.5. The reverse reaction is able to use NADPH as well as NADH.</text>
</comment>
<comment type="catalytic activity">
    <reaction evidence="4">
        <text>3-hydroxybutanoyl-CoA + NAD(+) = acetoacetyl-CoA + NADH + H(+)</text>
        <dbReference type="Rhea" id="RHEA:42048"/>
        <dbReference type="ChEBI" id="CHEBI:15378"/>
        <dbReference type="ChEBI" id="CHEBI:57286"/>
        <dbReference type="ChEBI" id="CHEBI:57540"/>
        <dbReference type="ChEBI" id="CHEBI:57945"/>
        <dbReference type="ChEBI" id="CHEBI:78611"/>
    </reaction>
    <physiologicalReaction direction="left-to-right" evidence="4">
        <dbReference type="Rhea" id="RHEA:42049"/>
    </physiologicalReaction>
    <physiologicalReaction direction="right-to-left" evidence="4">
        <dbReference type="Rhea" id="RHEA:42050"/>
    </physiologicalReaction>
</comment>
<comment type="catalytic activity">
    <reaction evidence="4">
        <text>(3S)-3-hydroxybutanoyl-CoA + NADP(+) = acetoacetyl-CoA + NADPH + H(+)</text>
        <dbReference type="Rhea" id="RHEA:16197"/>
        <dbReference type="ChEBI" id="CHEBI:15378"/>
        <dbReference type="ChEBI" id="CHEBI:57286"/>
        <dbReference type="ChEBI" id="CHEBI:57316"/>
        <dbReference type="ChEBI" id="CHEBI:57783"/>
        <dbReference type="ChEBI" id="CHEBI:58349"/>
        <dbReference type="EC" id="1.1.1.157"/>
    </reaction>
    <physiologicalReaction direction="right-to-left" evidence="4">
        <dbReference type="Rhea" id="RHEA:16199"/>
    </physiologicalReaction>
</comment>
<comment type="activity regulation">
    <text evidence="4">Activated by magnesium and calcium, and inhibited by zinc, nickel and cobalt.</text>
</comment>
<comment type="biophysicochemical properties">
    <kinetics>
        <KM evidence="4">29.5 mM for NAD (at pH 9.5 and at 30 degrees Celsius)</KM>
        <KM evidence="4">43.5 mM for beta-hydroxybutyryl-CoA (at pH 9.5 and at 30 degrees Celsius)</KM>
        <KM evidence="4">50 mM for NADH (at pH 9.5 and at 30 degrees Celsius)</KM>
        <KM evidence="4">65.6 mM for acetoacetyl-CoA (at pH 9.5 and at 30 degrees Celsius)</KM>
        <Vmax evidence="4">63.1 nmol/min/mg enzyme with NAD as substrate (at pH 9.5 and at 30 degrees Celsius)</Vmax>
        <Vmax evidence="4">126.6 nmol/min/mg enzyme with acetoacetyl-CoA as substrate (at pH 9.5 and at 30 degrees Celsius)</Vmax>
        <Vmax evidence="4">188.3 nmol/min/mg enzyme with beta-hydroxybutyryl-CoA as substrate (at pH 9.5 and at 30 degrees Celsius)</Vmax>
        <Vmax evidence="4">2588.0 nmol/min/mg enzyme with NADH as substrate (at pH 9.5 and at 30 degrees Celsius)</Vmax>
    </kinetics>
    <phDependence>
        <text evidence="4">Optimum pH is 10.</text>
    </phDependence>
    <temperatureDependence>
        <text evidence="4">Optimum temperature is 37 degrees Celsius.</text>
    </temperatureDependence>
</comment>
<comment type="pathway">
    <text>Lipid metabolism; butanoate metabolism.</text>
</comment>
<comment type="induction">
    <text evidence="2 3">Up-regulated upon acid shock and SDS stress.</text>
</comment>
<comment type="similarity">
    <text evidence="5">Belongs to the 3-hydroxyacyl-CoA dehydrogenase family.</text>
</comment>
<name>FADB2_MYCTU</name>
<feature type="chain" id="PRO_0000403378" description="3-hydroxybutyryl-CoA dehydrogenase">
    <location>
        <begin position="1"/>
        <end position="286"/>
    </location>
</feature>
<feature type="site" description="Important for catalytic activity" evidence="1">
    <location>
        <position position="143"/>
    </location>
</feature>
<feature type="mutagenesis site" description="Loss of fatty acyl dehydrogenase activity." evidence="4">
    <original>S</original>
    <variation>A</variation>
    <location>
        <position position="122"/>
    </location>
</feature>
<feature type="strand" evidence="6">
    <location>
        <begin position="7"/>
        <end position="11"/>
    </location>
</feature>
<feature type="helix" evidence="6">
    <location>
        <begin position="15"/>
        <end position="26"/>
    </location>
</feature>
<feature type="strand" evidence="6">
    <location>
        <begin position="30"/>
        <end position="34"/>
    </location>
</feature>
<feature type="helix" evidence="6">
    <location>
        <begin position="38"/>
        <end position="57"/>
    </location>
</feature>
<feature type="helix" evidence="6">
    <location>
        <begin position="63"/>
        <end position="71"/>
    </location>
</feature>
<feature type="strand" evidence="6">
    <location>
        <begin position="73"/>
        <end position="77"/>
    </location>
</feature>
<feature type="helix" evidence="6">
    <location>
        <begin position="79"/>
        <end position="82"/>
    </location>
</feature>
<feature type="strand" evidence="6">
    <location>
        <begin position="86"/>
        <end position="90"/>
    </location>
</feature>
<feature type="helix" evidence="6">
    <location>
        <begin position="96"/>
        <end position="109"/>
    </location>
</feature>
<feature type="strand" evidence="6">
    <location>
        <begin position="116"/>
        <end position="119"/>
    </location>
</feature>
<feature type="strand" evidence="6">
    <location>
        <begin position="122"/>
        <end position="124"/>
    </location>
</feature>
<feature type="helix" evidence="6">
    <location>
        <begin position="126"/>
        <end position="130"/>
    </location>
</feature>
<feature type="helix" evidence="6">
    <location>
        <begin position="136"/>
        <end position="138"/>
    </location>
</feature>
<feature type="strand" evidence="6">
    <location>
        <begin position="139"/>
        <end position="143"/>
    </location>
</feature>
<feature type="turn" evidence="6">
    <location>
        <begin position="148"/>
        <end position="150"/>
    </location>
</feature>
<feature type="strand" evidence="6">
    <location>
        <begin position="153"/>
        <end position="157"/>
    </location>
</feature>
<feature type="helix" evidence="6">
    <location>
        <begin position="164"/>
        <end position="176"/>
    </location>
</feature>
<feature type="strand" evidence="6">
    <location>
        <begin position="181"/>
        <end position="185"/>
    </location>
</feature>
<feature type="turn" evidence="6">
    <location>
        <begin position="189"/>
        <end position="192"/>
    </location>
</feature>
<feature type="helix" evidence="6">
    <location>
        <begin position="193"/>
        <end position="209"/>
    </location>
</feature>
<feature type="helix" evidence="6">
    <location>
        <begin position="215"/>
        <end position="226"/>
    </location>
</feature>
<feature type="helix" evidence="6">
    <location>
        <begin position="232"/>
        <end position="239"/>
    </location>
</feature>
<feature type="helix" evidence="6">
    <location>
        <begin position="241"/>
        <end position="255"/>
    </location>
</feature>
<feature type="helix" evidence="6">
    <location>
        <begin position="258"/>
        <end position="260"/>
    </location>
</feature>
<feature type="helix" evidence="6">
    <location>
        <begin position="264"/>
        <end position="272"/>
    </location>
</feature>
<feature type="helix" evidence="6">
    <location>
        <begin position="277"/>
        <end position="279"/>
    </location>
</feature>
<feature type="strand" evidence="6">
    <location>
        <begin position="281"/>
        <end position="285"/>
    </location>
</feature>
<organism>
    <name type="scientific">Mycobacterium tuberculosis (strain ATCC 25618 / H37Rv)</name>
    <dbReference type="NCBI Taxonomy" id="83332"/>
    <lineage>
        <taxon>Bacteria</taxon>
        <taxon>Bacillati</taxon>
        <taxon>Actinomycetota</taxon>
        <taxon>Actinomycetes</taxon>
        <taxon>Mycobacteriales</taxon>
        <taxon>Mycobacteriaceae</taxon>
        <taxon>Mycobacterium</taxon>
        <taxon>Mycobacterium tuberculosis complex</taxon>
    </lineage>
</organism>
<sequence>MSDAIQRVGVVGAGQMGSGIAEVSARAGVEVTVFEPAEALITAGRNRIVKSLERAVSAGKVTERERDRALGLLTFTTDLNDLSDRQLVIEAVVEDEAVKSEIFAELDRVVTDPDAVLASNTSSIPIMKVAAATKQPQRVLGLHFFNPVPVLPLVELVRTLVTDEAAAARTEEFASTVLGKQVVRCSDRSGFVVNALLVPYLLSAIRMVEAGFATVEDVDKAVVAGLSHPMGPLRLSDLVGLDTLKLIADKMFEEFKEPHYGPPPLLLRMVEAGQLGKKSGRGFYTY</sequence>
<accession>P9WNP7</accession>
<accession>L0T3U3</accession>
<accession>O53753</accession>
<accession>Q7D9R6</accession>
<reference key="1">
    <citation type="journal article" date="1998" name="Nature">
        <title>Deciphering the biology of Mycobacterium tuberculosis from the complete genome sequence.</title>
        <authorList>
            <person name="Cole S.T."/>
            <person name="Brosch R."/>
            <person name="Parkhill J."/>
            <person name="Garnier T."/>
            <person name="Churcher C.M."/>
            <person name="Harris D.E."/>
            <person name="Gordon S.V."/>
            <person name="Eiglmeier K."/>
            <person name="Gas S."/>
            <person name="Barry C.E. III"/>
            <person name="Tekaia F."/>
            <person name="Badcock K."/>
            <person name="Basham D."/>
            <person name="Brown D."/>
            <person name="Chillingworth T."/>
            <person name="Connor R."/>
            <person name="Davies R.M."/>
            <person name="Devlin K."/>
            <person name="Feltwell T."/>
            <person name="Gentles S."/>
            <person name="Hamlin N."/>
            <person name="Holroyd S."/>
            <person name="Hornsby T."/>
            <person name="Jagels K."/>
            <person name="Krogh A."/>
            <person name="McLean J."/>
            <person name="Moule S."/>
            <person name="Murphy L.D."/>
            <person name="Oliver S."/>
            <person name="Osborne J."/>
            <person name="Quail M.A."/>
            <person name="Rajandream M.A."/>
            <person name="Rogers J."/>
            <person name="Rutter S."/>
            <person name="Seeger K."/>
            <person name="Skelton S."/>
            <person name="Squares S."/>
            <person name="Squares R."/>
            <person name="Sulston J.E."/>
            <person name="Taylor K."/>
            <person name="Whitehead S."/>
            <person name="Barrell B.G."/>
        </authorList>
    </citation>
    <scope>NUCLEOTIDE SEQUENCE [LARGE SCALE GENOMIC DNA]</scope>
    <source>
        <strain>ATCC 25618 / H37Rv</strain>
    </source>
</reference>
<reference key="2">
    <citation type="journal article" date="2001" name="Mol. Microbiol.">
        <title>The Mycobacterium tuberculosis ECF sigma factor sigmaE: role in global gene expression and survival in macrophages.</title>
        <authorList>
            <person name="Manganelli R."/>
            <person name="Voskuil M.I."/>
            <person name="Schoolnik G.K."/>
            <person name="Smith I."/>
        </authorList>
    </citation>
    <scope>INDUCTION</scope>
</reference>
<reference key="3">
    <citation type="journal article" date="2002" name="J. Bacteriol.">
        <title>Microarray analysis of the Mycobacterium tuberculosis transcriptional response to the acidic conditions found in phagosomes.</title>
        <authorList>
            <person name="Fisher M.A."/>
            <person name="Plikaytis B.B."/>
            <person name="Shinnick T.M."/>
        </authorList>
    </citation>
    <scope>INDUCTION</scope>
</reference>
<reference key="4">
    <citation type="journal article" date="2010" name="Microbiology">
        <title>Characterization of a beta-hydroxybutyryl-CoA dehydrogenase from Mycobacterium tuberculosis.</title>
        <authorList>
            <person name="Taylor R.C."/>
            <person name="Brown A.K."/>
            <person name="Singh A."/>
            <person name="Bhatt A."/>
            <person name="Besra G.S."/>
        </authorList>
    </citation>
    <scope>FUNCTION AS A 3-HYDROXYBUTYRYL-COA DEHYDROGENASE</scope>
    <scope>CATALYTIC ACTIVITY</scope>
    <scope>MUTAGENESIS OF SER-122</scope>
    <scope>ACTIVITY REGULATION</scope>
    <scope>BIOPHYSICOCHEMICAL PROPERTIES</scope>
</reference>
<reference key="5">
    <citation type="journal article" date="2011" name="Mol. Cell. Proteomics">
        <title>Proteogenomic analysis of Mycobacterium tuberculosis by high resolution mass spectrometry.</title>
        <authorList>
            <person name="Kelkar D.S."/>
            <person name="Kumar D."/>
            <person name="Kumar P."/>
            <person name="Balakrishnan L."/>
            <person name="Muthusamy B."/>
            <person name="Yadav A.K."/>
            <person name="Shrivastava P."/>
            <person name="Marimuthu A."/>
            <person name="Anand S."/>
            <person name="Sundaram H."/>
            <person name="Kingsbury R."/>
            <person name="Harsha H.C."/>
            <person name="Nair B."/>
            <person name="Prasad T.S."/>
            <person name="Chauhan D.S."/>
            <person name="Katoch K."/>
            <person name="Katoch V.M."/>
            <person name="Kumar P."/>
            <person name="Chaerkady R."/>
            <person name="Ramachandran S."/>
            <person name="Dash D."/>
            <person name="Pandey A."/>
        </authorList>
    </citation>
    <scope>IDENTIFICATION BY MASS SPECTROMETRY [LARGE SCALE ANALYSIS]</scope>
    <source>
        <strain>ATCC 25618 / H37Rv</strain>
    </source>
</reference>
<proteinExistence type="evidence at protein level"/>